<gene>
    <name type="primary">yuaS</name>
    <name type="synonym">ydfA</name>
    <name type="ordered locus">ECOK12F031</name>
</gene>
<accession>Q9JMS2</accession>
<protein>
    <recommendedName>
        <fullName>Uncharacterized protein YuaS</fullName>
    </recommendedName>
</protein>
<sequence>MGRIAYKSVIMLSLQPSCVKSNCQGDGDVPGQNTRGAPSPFLFPFSVFSDPIHPGITPILPKTANQPSARATTGLIRDPCCKTYLYVFGFTRNNA</sequence>
<name>YUAS_ECOLI</name>
<geneLocation type="plasmid">
    <name>F</name>
</geneLocation>
<keyword id="KW-0614">Plasmid</keyword>
<reference key="1">
    <citation type="submission" date="2000-04" db="EMBL/GenBank/DDBJ databases">
        <title>Complete nucleotide sequence of the F plasmid: its implications for organization and diversification of plasmid genomes.</title>
        <authorList>
            <person name="Shimizu H."/>
            <person name="Saitoh Y."/>
            <person name="Suda Y."/>
            <person name="Uehara K."/>
            <person name="Sampei G."/>
            <person name="Mizobuchi K."/>
        </authorList>
    </citation>
    <scope>NUCLEOTIDE SEQUENCE [LARGE SCALE GENOMIC DNA]</scope>
    <source>
        <strain>K12 / CR63</strain>
    </source>
</reference>
<organism>
    <name type="scientific">Escherichia coli (strain K12)</name>
    <dbReference type="NCBI Taxonomy" id="83333"/>
    <lineage>
        <taxon>Bacteria</taxon>
        <taxon>Pseudomonadati</taxon>
        <taxon>Pseudomonadota</taxon>
        <taxon>Gammaproteobacteria</taxon>
        <taxon>Enterobacterales</taxon>
        <taxon>Enterobacteriaceae</taxon>
        <taxon>Escherichia</taxon>
    </lineage>
</organism>
<feature type="chain" id="PRO_0000267224" description="Uncharacterized protein YuaS">
    <location>
        <begin position="1"/>
        <end position="95"/>
    </location>
</feature>
<dbReference type="EMBL" id="AP001918">
    <property type="protein sequence ID" value="BAA97901.1"/>
    <property type="molecule type" value="Genomic_DNA"/>
</dbReference>
<dbReference type="RefSeq" id="NP_061410.1">
    <property type="nucleotide sequence ID" value="NC_002483.1"/>
</dbReference>
<proteinExistence type="predicted"/>